<proteinExistence type="inferred from homology"/>
<sequence>MANFKLFLALAACLSGQALAAPTKTIGKRAAITDVAHGYASQNGGTTGGAGGTTTTVSSYAQFTEAVSSDDAKIVIVDGTITETADQVKVGSNTSIIGKDANAILEGFGLLVKEKENVIIRNLGVKKVLADNGDAIGVQYSNNVWIDHCDVSSDRDHDKDYYDGLIDLTHAADYVTVSNTFVHDHWKAMLFGHSDSNGDEDTGHLRITVNNNYLNNLNSRGPSFRFGTGHLYNNYYLDVSDGINTRQGAQLLVEGNVWSGGKKPLYSTDDGYAVARDNDFGDGENTAPEGTLTSVPYEYDLLAASAVKDAVVGTAGQTLTF</sequence>
<feature type="signal peptide" evidence="2">
    <location>
        <begin position="1"/>
        <end position="20"/>
    </location>
</feature>
<feature type="chain" id="PRO_0000394560" description="Probable pectate lyase A">
    <location>
        <begin position="21"/>
        <end position="321"/>
    </location>
</feature>
<feature type="active site" evidence="2">
    <location>
        <position position="220"/>
    </location>
</feature>
<feature type="binding site" evidence="1">
    <location>
        <position position="134"/>
    </location>
    <ligand>
        <name>Ca(2+)</name>
        <dbReference type="ChEBI" id="CHEBI:29108"/>
    </ligand>
</feature>
<feature type="binding site" evidence="1">
    <location>
        <position position="163"/>
    </location>
    <ligand>
        <name>Ca(2+)</name>
        <dbReference type="ChEBI" id="CHEBI:29108"/>
    </ligand>
</feature>
<feature type="binding site" evidence="1">
    <location>
        <position position="167"/>
    </location>
    <ligand>
        <name>Ca(2+)</name>
        <dbReference type="ChEBI" id="CHEBI:29108"/>
    </ligand>
</feature>
<feature type="glycosylation site" description="N-linked (GlcNAc...) asparagine" evidence="2">
    <location>
        <position position="93"/>
    </location>
</feature>
<dbReference type="EC" id="4.2.2.2"/>
<dbReference type="EMBL" id="EQ963477">
    <property type="protein sequence ID" value="EED51514.1"/>
    <property type="molecule type" value="Genomic_DNA"/>
</dbReference>
<dbReference type="RefSeq" id="XP_002378521.1">
    <property type="nucleotide sequence ID" value="XM_002378480.1"/>
</dbReference>
<dbReference type="SMR" id="B8NE46"/>
<dbReference type="STRING" id="332952.B8NE46"/>
<dbReference type="GlyCosmos" id="B8NE46">
    <property type="glycosylation" value="1 site, No reported glycans"/>
</dbReference>
<dbReference type="EnsemblFungi" id="EED51514">
    <property type="protein sequence ID" value="EED51514"/>
    <property type="gene ID" value="AFLA_057770"/>
</dbReference>
<dbReference type="VEuPathDB" id="FungiDB:AFLA_004825"/>
<dbReference type="eggNOG" id="ENOG502S66G">
    <property type="taxonomic scope" value="Eukaryota"/>
</dbReference>
<dbReference type="HOGENOM" id="CLU_021894_2_1_1"/>
<dbReference type="OMA" id="NYWIDHV"/>
<dbReference type="GO" id="GO:0005576">
    <property type="term" value="C:extracellular region"/>
    <property type="evidence" value="ECO:0000250"/>
    <property type="project" value="UniProtKB"/>
</dbReference>
<dbReference type="GO" id="GO:0046872">
    <property type="term" value="F:metal ion binding"/>
    <property type="evidence" value="ECO:0007669"/>
    <property type="project" value="UniProtKB-KW"/>
</dbReference>
<dbReference type="GO" id="GO:0030570">
    <property type="term" value="F:pectate lyase activity"/>
    <property type="evidence" value="ECO:0000250"/>
    <property type="project" value="UniProtKB"/>
</dbReference>
<dbReference type="GO" id="GO:0071555">
    <property type="term" value="P:cell wall organization"/>
    <property type="evidence" value="ECO:0007669"/>
    <property type="project" value="UniProtKB-KW"/>
</dbReference>
<dbReference type="GO" id="GO:0045490">
    <property type="term" value="P:pectin catabolic process"/>
    <property type="evidence" value="ECO:0000250"/>
    <property type="project" value="UniProtKB"/>
</dbReference>
<dbReference type="FunFam" id="2.160.20.10:FF:000036">
    <property type="entry name" value="Pectate lyase A"/>
    <property type="match status" value="1"/>
</dbReference>
<dbReference type="Gene3D" id="2.160.20.10">
    <property type="entry name" value="Single-stranded right-handed beta-helix, Pectin lyase-like"/>
    <property type="match status" value="1"/>
</dbReference>
<dbReference type="InterPro" id="IPR002022">
    <property type="entry name" value="Pec_lyase"/>
</dbReference>
<dbReference type="InterPro" id="IPR012334">
    <property type="entry name" value="Pectin_lyas_fold"/>
</dbReference>
<dbReference type="InterPro" id="IPR011050">
    <property type="entry name" value="Pectin_lyase_fold/virulence"/>
</dbReference>
<dbReference type="InterPro" id="IPR045032">
    <property type="entry name" value="PEL"/>
</dbReference>
<dbReference type="PANTHER" id="PTHR31683">
    <property type="entry name" value="PECTATE LYASE 18-RELATED"/>
    <property type="match status" value="1"/>
</dbReference>
<dbReference type="PANTHER" id="PTHR31683:SF18">
    <property type="entry name" value="PECTATE LYASE 21-RELATED"/>
    <property type="match status" value="1"/>
</dbReference>
<dbReference type="Pfam" id="PF00544">
    <property type="entry name" value="Pectate_lyase_4"/>
    <property type="match status" value="1"/>
</dbReference>
<dbReference type="SMART" id="SM00656">
    <property type="entry name" value="Amb_all"/>
    <property type="match status" value="1"/>
</dbReference>
<dbReference type="SUPFAM" id="SSF51126">
    <property type="entry name" value="Pectin lyase-like"/>
    <property type="match status" value="1"/>
</dbReference>
<keyword id="KW-0106">Calcium</keyword>
<keyword id="KW-0119">Carbohydrate metabolism</keyword>
<keyword id="KW-0961">Cell wall biogenesis/degradation</keyword>
<keyword id="KW-0325">Glycoprotein</keyword>
<keyword id="KW-0456">Lyase</keyword>
<keyword id="KW-0479">Metal-binding</keyword>
<keyword id="KW-0624">Polysaccharide degradation</keyword>
<keyword id="KW-0964">Secreted</keyword>
<keyword id="KW-0732">Signal</keyword>
<evidence type="ECO:0000250" key="1"/>
<evidence type="ECO:0000255" key="2"/>
<evidence type="ECO:0000305" key="3"/>
<accession>B8NE46</accession>
<gene>
    <name type="primary">plyA</name>
    <name type="ORF">AFLA_057770</name>
</gene>
<name>PLYA_ASPFN</name>
<comment type="function">
    <text evidence="1">Pectinolytic enzyme consist of four classes of enzymes: pectin lyase, polygalacturonase, pectin methylesterase and rhamnogalacturonase. Among pectinolytic enzymes, pectin lyase is the most important in depolymerization of pectin, since it cleaves internal glycosidic bonds of highly methylated pectins. Favors pectate, the anion, over pectin, the methyl ester (By similarity).</text>
</comment>
<comment type="catalytic activity">
    <reaction>
        <text>Eliminative cleavage of (1-&gt;4)-alpha-D-galacturonan to give oligosaccharides with 4-deoxy-alpha-D-galact-4-enuronosyl groups at their non-reducing ends.</text>
        <dbReference type="EC" id="4.2.2.2"/>
    </reaction>
</comment>
<comment type="cofactor">
    <cofactor evidence="1">
        <name>Ca(2+)</name>
        <dbReference type="ChEBI" id="CHEBI:29108"/>
    </cofactor>
    <text evidence="1">Binds 1 Ca(2+) ion per subunit.</text>
</comment>
<comment type="subcellular location">
    <subcellularLocation>
        <location evidence="1">Secreted</location>
    </subcellularLocation>
</comment>
<comment type="similarity">
    <text evidence="3">Belongs to the polysaccharide lyase 1 family.</text>
</comment>
<organism>
    <name type="scientific">Aspergillus flavus (strain ATCC 200026 / FGSC A1120 / IAM 13836 / NRRL 3357 / JCM 12722 / SRRC 167)</name>
    <dbReference type="NCBI Taxonomy" id="332952"/>
    <lineage>
        <taxon>Eukaryota</taxon>
        <taxon>Fungi</taxon>
        <taxon>Dikarya</taxon>
        <taxon>Ascomycota</taxon>
        <taxon>Pezizomycotina</taxon>
        <taxon>Eurotiomycetes</taxon>
        <taxon>Eurotiomycetidae</taxon>
        <taxon>Eurotiales</taxon>
        <taxon>Aspergillaceae</taxon>
        <taxon>Aspergillus</taxon>
        <taxon>Aspergillus subgen. Circumdati</taxon>
    </lineage>
</organism>
<reference key="1">
    <citation type="journal article" date="2015" name="Genome Announc.">
        <title>Genome sequence of Aspergillus flavus NRRL 3357, a strain that causes aflatoxin contamination of food and feed.</title>
        <authorList>
            <person name="Nierman W.C."/>
            <person name="Yu J."/>
            <person name="Fedorova-Abrams N.D."/>
            <person name="Losada L."/>
            <person name="Cleveland T.E."/>
            <person name="Bhatnagar D."/>
            <person name="Bennett J.W."/>
            <person name="Dean R."/>
            <person name="Payne G.A."/>
        </authorList>
    </citation>
    <scope>NUCLEOTIDE SEQUENCE [LARGE SCALE GENOMIC DNA]</scope>
    <source>
        <strain>ATCC 200026 / FGSC A1120 / IAM 13836 / NRRL 3357 / JCM 12722 / SRRC 167</strain>
    </source>
</reference>
<protein>
    <recommendedName>
        <fullName>Probable pectate lyase A</fullName>
        <ecNumber>4.2.2.2</ecNumber>
    </recommendedName>
</protein>